<protein>
    <recommendedName>
        <fullName evidence="1">Chaperone protein DnaK</fullName>
    </recommendedName>
    <alternativeName>
        <fullName evidence="1">HSP70</fullName>
    </alternativeName>
    <alternativeName>
        <fullName evidence="1">Heat shock 70 kDa protein</fullName>
    </alternativeName>
    <alternativeName>
        <fullName evidence="1">Heat shock protein 70</fullName>
    </alternativeName>
</protein>
<sequence>MAKVIGIDLGTTNSCVAVMEGDKVKVIENSEGKRTTPSIVAITEEGEVLVGEAAKRQAVTNPENTVYEVKRLIGRKFDDAEVQKDLKHVPYKVIKADNGDAWVEVRDKKYSAQQISAFILQKMKKTAEDYLGEKVTEAVITVPAYFNDAQRQATKDAGRIAGLEVKRIINEPTAAALAFGEDKKPGDSKIAVYDLGGGTFDISIIEIAEMEGEHQFEVLSTNGDTFLGGGDFDSRVINYLADSFKAESGIDLRGDRLAMQRLKEAAEKAKIELSSAQQTDVNLPFITADQSGPKHLNMKLTRAKLESLVEDLIDRSMAPCRVAMKDANLATSRITDVILVGGQSRMPKVQEKVKDFFGQDPRKDVNPDEAVAIGAAIQGAVLSGEKKDVLLMDVTPLSLGIETLGGVMTKLIEKNTTIPTRKSQIFSTAEDNQSAVTVHVLQGERELARDNKSLARFDLTDIANAPRGMPQIEVTFDIDANGILHVSAKDNQTGKEQSIKITASSGLSEEEIKRMIQEAEAHAADDKKARALIEARNEADASVHGARKAVEEHAAAPEHDKTKVTEAISAVENAAKGEDVEAIKGAVATLMAAMSALLQSAAAGQAQAESGAGAQGNAKPDDVVDAEFEEVDKK</sequence>
<keyword id="KW-0067">ATP-binding</keyword>
<keyword id="KW-0143">Chaperone</keyword>
<keyword id="KW-0547">Nucleotide-binding</keyword>
<keyword id="KW-0597">Phosphoprotein</keyword>
<keyword id="KW-1185">Reference proteome</keyword>
<keyword id="KW-0346">Stress response</keyword>
<gene>
    <name evidence="1" type="primary">dnaK</name>
    <name type="ordered locus">AFE_2665</name>
</gene>
<comment type="function">
    <text evidence="1">Acts as a chaperone.</text>
</comment>
<comment type="induction">
    <text evidence="1">By stress conditions e.g. heat shock.</text>
</comment>
<comment type="similarity">
    <text evidence="1">Belongs to the heat shock protein 70 family.</text>
</comment>
<reference key="1">
    <citation type="journal article" date="2008" name="BMC Genomics">
        <title>Acidithiobacillus ferrooxidans metabolism: from genome sequence to industrial applications.</title>
        <authorList>
            <person name="Valdes J."/>
            <person name="Pedroso I."/>
            <person name="Quatrini R."/>
            <person name="Dodson R.J."/>
            <person name="Tettelin H."/>
            <person name="Blake R. II"/>
            <person name="Eisen J.A."/>
            <person name="Holmes D.S."/>
        </authorList>
    </citation>
    <scope>NUCLEOTIDE SEQUENCE [LARGE SCALE GENOMIC DNA]</scope>
    <source>
        <strain>ATCC 23270 / DSM 14882 / CIP 104768 / NCIMB 8455</strain>
    </source>
</reference>
<evidence type="ECO:0000255" key="1">
    <source>
        <dbReference type="HAMAP-Rule" id="MF_00332"/>
    </source>
</evidence>
<evidence type="ECO:0000256" key="2">
    <source>
        <dbReference type="SAM" id="MobiDB-lite"/>
    </source>
</evidence>
<accession>B7J7X9</accession>
<organism>
    <name type="scientific">Acidithiobacillus ferrooxidans (strain ATCC 23270 / DSM 14882 / CIP 104768 / NCIMB 8455)</name>
    <name type="common">Ferrobacillus ferrooxidans (strain ATCC 23270)</name>
    <dbReference type="NCBI Taxonomy" id="243159"/>
    <lineage>
        <taxon>Bacteria</taxon>
        <taxon>Pseudomonadati</taxon>
        <taxon>Pseudomonadota</taxon>
        <taxon>Acidithiobacillia</taxon>
        <taxon>Acidithiobacillales</taxon>
        <taxon>Acidithiobacillaceae</taxon>
        <taxon>Acidithiobacillus</taxon>
    </lineage>
</organism>
<proteinExistence type="inferred from homology"/>
<name>DNAK_ACIF2</name>
<feature type="chain" id="PRO_1000119656" description="Chaperone protein DnaK">
    <location>
        <begin position="1"/>
        <end position="634"/>
    </location>
</feature>
<feature type="region of interest" description="Disordered" evidence="2">
    <location>
        <begin position="601"/>
        <end position="634"/>
    </location>
</feature>
<feature type="compositionally biased region" description="Low complexity" evidence="2">
    <location>
        <begin position="601"/>
        <end position="618"/>
    </location>
</feature>
<feature type="compositionally biased region" description="Acidic residues" evidence="2">
    <location>
        <begin position="623"/>
        <end position="634"/>
    </location>
</feature>
<feature type="modified residue" description="Phosphothreonine; by autocatalysis" evidence="1">
    <location>
        <position position="199"/>
    </location>
</feature>
<dbReference type="EMBL" id="CP001219">
    <property type="protein sequence ID" value="ACK80714.1"/>
    <property type="molecule type" value="Genomic_DNA"/>
</dbReference>
<dbReference type="RefSeq" id="WP_009563301.1">
    <property type="nucleotide sequence ID" value="NC_011761.1"/>
</dbReference>
<dbReference type="SMR" id="B7J7X9"/>
<dbReference type="STRING" id="243159.AFE_2665"/>
<dbReference type="PaxDb" id="243159-AFE_2665"/>
<dbReference type="GeneID" id="65281710"/>
<dbReference type="KEGG" id="afr:AFE_2665"/>
<dbReference type="eggNOG" id="COG0443">
    <property type="taxonomic scope" value="Bacteria"/>
</dbReference>
<dbReference type="HOGENOM" id="CLU_005965_2_1_6"/>
<dbReference type="Proteomes" id="UP000001362">
    <property type="component" value="Chromosome"/>
</dbReference>
<dbReference type="GO" id="GO:0005524">
    <property type="term" value="F:ATP binding"/>
    <property type="evidence" value="ECO:0007669"/>
    <property type="project" value="UniProtKB-UniRule"/>
</dbReference>
<dbReference type="GO" id="GO:0140662">
    <property type="term" value="F:ATP-dependent protein folding chaperone"/>
    <property type="evidence" value="ECO:0007669"/>
    <property type="project" value="InterPro"/>
</dbReference>
<dbReference type="GO" id="GO:0051082">
    <property type="term" value="F:unfolded protein binding"/>
    <property type="evidence" value="ECO:0007669"/>
    <property type="project" value="InterPro"/>
</dbReference>
<dbReference type="CDD" id="cd10234">
    <property type="entry name" value="ASKHA_NBD_HSP70_DnaK-like"/>
    <property type="match status" value="1"/>
</dbReference>
<dbReference type="FunFam" id="2.60.34.10:FF:000014">
    <property type="entry name" value="Chaperone protein DnaK HSP70"/>
    <property type="match status" value="1"/>
</dbReference>
<dbReference type="FunFam" id="3.30.30.30:FF:000003">
    <property type="entry name" value="Heat shock protein 9"/>
    <property type="match status" value="1"/>
</dbReference>
<dbReference type="FunFam" id="1.20.1270.10:FF:000001">
    <property type="entry name" value="Molecular chaperone DnaK"/>
    <property type="match status" value="1"/>
</dbReference>
<dbReference type="FunFam" id="3.30.420.40:FF:000004">
    <property type="entry name" value="Molecular chaperone DnaK"/>
    <property type="match status" value="1"/>
</dbReference>
<dbReference type="FunFam" id="3.90.640.10:FF:000003">
    <property type="entry name" value="Molecular chaperone DnaK"/>
    <property type="match status" value="1"/>
</dbReference>
<dbReference type="Gene3D" id="1.20.1270.10">
    <property type="match status" value="1"/>
</dbReference>
<dbReference type="Gene3D" id="3.30.420.40">
    <property type="match status" value="2"/>
</dbReference>
<dbReference type="Gene3D" id="3.90.640.10">
    <property type="entry name" value="Actin, Chain A, domain 4"/>
    <property type="match status" value="1"/>
</dbReference>
<dbReference type="Gene3D" id="2.60.34.10">
    <property type="entry name" value="Substrate Binding Domain Of DNAk, Chain A, domain 1"/>
    <property type="match status" value="1"/>
</dbReference>
<dbReference type="HAMAP" id="MF_00332">
    <property type="entry name" value="DnaK"/>
    <property type="match status" value="1"/>
</dbReference>
<dbReference type="InterPro" id="IPR043129">
    <property type="entry name" value="ATPase_NBD"/>
</dbReference>
<dbReference type="InterPro" id="IPR012725">
    <property type="entry name" value="Chaperone_DnaK"/>
</dbReference>
<dbReference type="InterPro" id="IPR018181">
    <property type="entry name" value="Heat_shock_70_CS"/>
</dbReference>
<dbReference type="InterPro" id="IPR029048">
    <property type="entry name" value="HSP70_C_sf"/>
</dbReference>
<dbReference type="InterPro" id="IPR029047">
    <property type="entry name" value="HSP70_peptide-bd_sf"/>
</dbReference>
<dbReference type="InterPro" id="IPR013126">
    <property type="entry name" value="Hsp_70_fam"/>
</dbReference>
<dbReference type="NCBIfam" id="NF001413">
    <property type="entry name" value="PRK00290.1"/>
    <property type="match status" value="1"/>
</dbReference>
<dbReference type="NCBIfam" id="TIGR02350">
    <property type="entry name" value="prok_dnaK"/>
    <property type="match status" value="1"/>
</dbReference>
<dbReference type="PANTHER" id="PTHR19375">
    <property type="entry name" value="HEAT SHOCK PROTEIN 70KDA"/>
    <property type="match status" value="1"/>
</dbReference>
<dbReference type="Pfam" id="PF00012">
    <property type="entry name" value="HSP70"/>
    <property type="match status" value="1"/>
</dbReference>
<dbReference type="PRINTS" id="PR00301">
    <property type="entry name" value="HEATSHOCK70"/>
</dbReference>
<dbReference type="SUPFAM" id="SSF53067">
    <property type="entry name" value="Actin-like ATPase domain"/>
    <property type="match status" value="2"/>
</dbReference>
<dbReference type="SUPFAM" id="SSF100934">
    <property type="entry name" value="Heat shock protein 70kD (HSP70), C-terminal subdomain"/>
    <property type="match status" value="1"/>
</dbReference>
<dbReference type="SUPFAM" id="SSF100920">
    <property type="entry name" value="Heat shock protein 70kD (HSP70), peptide-binding domain"/>
    <property type="match status" value="1"/>
</dbReference>
<dbReference type="PROSITE" id="PS00297">
    <property type="entry name" value="HSP70_1"/>
    <property type="match status" value="1"/>
</dbReference>
<dbReference type="PROSITE" id="PS00329">
    <property type="entry name" value="HSP70_2"/>
    <property type="match status" value="1"/>
</dbReference>
<dbReference type="PROSITE" id="PS01036">
    <property type="entry name" value="HSP70_3"/>
    <property type="match status" value="1"/>
</dbReference>